<keyword id="KW-1185">Reference proteome</keyword>
<keyword id="KW-0687">Ribonucleoprotein</keyword>
<keyword id="KW-0689">Ribosomal protein</keyword>
<keyword id="KW-0694">RNA-binding</keyword>
<keyword id="KW-0699">rRNA-binding</keyword>
<reference key="1">
    <citation type="journal article" date="2006" name="Proc. Natl. Acad. Sci. U.S.A.">
        <title>Burkholderia xenovorans LB400 harbors a multi-replicon, 9.73-Mbp genome shaped for versatility.</title>
        <authorList>
            <person name="Chain P.S.G."/>
            <person name="Denef V.J."/>
            <person name="Konstantinidis K.T."/>
            <person name="Vergez L.M."/>
            <person name="Agullo L."/>
            <person name="Reyes V.L."/>
            <person name="Hauser L."/>
            <person name="Cordova M."/>
            <person name="Gomez L."/>
            <person name="Gonzalez M."/>
            <person name="Land M."/>
            <person name="Lao V."/>
            <person name="Larimer F."/>
            <person name="LiPuma J.J."/>
            <person name="Mahenthiralingam E."/>
            <person name="Malfatti S.A."/>
            <person name="Marx C.J."/>
            <person name="Parnell J.J."/>
            <person name="Ramette A."/>
            <person name="Richardson P."/>
            <person name="Seeger M."/>
            <person name="Smith D."/>
            <person name="Spilker T."/>
            <person name="Sul W.J."/>
            <person name="Tsoi T.V."/>
            <person name="Ulrich L.E."/>
            <person name="Zhulin I.B."/>
            <person name="Tiedje J.M."/>
        </authorList>
    </citation>
    <scope>NUCLEOTIDE SEQUENCE [LARGE SCALE GENOMIC DNA]</scope>
    <source>
        <strain>LB400</strain>
    </source>
</reference>
<comment type="function">
    <text evidence="1">This is one of the proteins that bind and probably mediate the attachment of the 5S RNA into the large ribosomal subunit, where it forms part of the central protuberance.</text>
</comment>
<comment type="subunit">
    <text evidence="1">Part of the 50S ribosomal subunit; part of the 5S rRNA/L5/L18/L25 subcomplex. Contacts the 5S and 23S rRNAs.</text>
</comment>
<comment type="similarity">
    <text evidence="1">Belongs to the universal ribosomal protein uL18 family.</text>
</comment>
<proteinExistence type="inferred from homology"/>
<feature type="chain" id="PRO_0000251296" description="Large ribosomal subunit protein uL18">
    <location>
        <begin position="1"/>
        <end position="121"/>
    </location>
</feature>
<evidence type="ECO:0000255" key="1">
    <source>
        <dbReference type="HAMAP-Rule" id="MF_01337"/>
    </source>
</evidence>
<evidence type="ECO:0000305" key="2"/>
<sequence>MDKTQSRLRRARQTRIKIAELQVARLAVHRTNTHIYAQVFSPCGTKVLASASTLEAEVRAQLADQTGKGGNVAAATLIGKRIAEKAKAAGIESVAFDRSGFRYHGRVKALADAAREAGLKF</sequence>
<dbReference type="EMBL" id="CP000270">
    <property type="protein sequence ID" value="ABE32603.1"/>
    <property type="molecule type" value="Genomic_DNA"/>
</dbReference>
<dbReference type="RefSeq" id="WP_006052218.1">
    <property type="nucleotide sequence ID" value="NZ_CP008760.1"/>
</dbReference>
<dbReference type="SMR" id="Q13TI6"/>
<dbReference type="STRING" id="266265.Bxe_A0330"/>
<dbReference type="GeneID" id="97055876"/>
<dbReference type="KEGG" id="bxb:DR64_2500"/>
<dbReference type="KEGG" id="bxe:Bxe_A0330"/>
<dbReference type="eggNOG" id="COG0256">
    <property type="taxonomic scope" value="Bacteria"/>
</dbReference>
<dbReference type="OrthoDB" id="9810939at2"/>
<dbReference type="Proteomes" id="UP000001817">
    <property type="component" value="Chromosome 1"/>
</dbReference>
<dbReference type="GO" id="GO:0022625">
    <property type="term" value="C:cytosolic large ribosomal subunit"/>
    <property type="evidence" value="ECO:0007669"/>
    <property type="project" value="TreeGrafter"/>
</dbReference>
<dbReference type="GO" id="GO:0008097">
    <property type="term" value="F:5S rRNA binding"/>
    <property type="evidence" value="ECO:0007669"/>
    <property type="project" value="TreeGrafter"/>
</dbReference>
<dbReference type="GO" id="GO:0003735">
    <property type="term" value="F:structural constituent of ribosome"/>
    <property type="evidence" value="ECO:0007669"/>
    <property type="project" value="InterPro"/>
</dbReference>
<dbReference type="GO" id="GO:0006412">
    <property type="term" value="P:translation"/>
    <property type="evidence" value="ECO:0007669"/>
    <property type="project" value="UniProtKB-UniRule"/>
</dbReference>
<dbReference type="CDD" id="cd00432">
    <property type="entry name" value="Ribosomal_L18_L5e"/>
    <property type="match status" value="1"/>
</dbReference>
<dbReference type="FunFam" id="3.30.420.100:FF:000001">
    <property type="entry name" value="50S ribosomal protein L18"/>
    <property type="match status" value="1"/>
</dbReference>
<dbReference type="Gene3D" id="3.30.420.100">
    <property type="match status" value="1"/>
</dbReference>
<dbReference type="HAMAP" id="MF_01337_B">
    <property type="entry name" value="Ribosomal_uL18_B"/>
    <property type="match status" value="1"/>
</dbReference>
<dbReference type="InterPro" id="IPR004389">
    <property type="entry name" value="Ribosomal_uL18_bac-type"/>
</dbReference>
<dbReference type="InterPro" id="IPR005484">
    <property type="entry name" value="Ribosomal_uL18_bac/euk"/>
</dbReference>
<dbReference type="NCBIfam" id="TIGR00060">
    <property type="entry name" value="L18_bact"/>
    <property type="match status" value="1"/>
</dbReference>
<dbReference type="PANTHER" id="PTHR12899">
    <property type="entry name" value="39S RIBOSOMAL PROTEIN L18, MITOCHONDRIAL"/>
    <property type="match status" value="1"/>
</dbReference>
<dbReference type="PANTHER" id="PTHR12899:SF3">
    <property type="entry name" value="LARGE RIBOSOMAL SUBUNIT PROTEIN UL18M"/>
    <property type="match status" value="1"/>
</dbReference>
<dbReference type="Pfam" id="PF00861">
    <property type="entry name" value="Ribosomal_L18p"/>
    <property type="match status" value="1"/>
</dbReference>
<dbReference type="SUPFAM" id="SSF53137">
    <property type="entry name" value="Translational machinery components"/>
    <property type="match status" value="1"/>
</dbReference>
<gene>
    <name evidence="1" type="primary">rplR</name>
    <name type="ordered locus">Bxeno_A4065</name>
    <name type="ORF">Bxe_A0330</name>
</gene>
<name>RL18_PARXL</name>
<accession>Q13TI6</accession>
<organism>
    <name type="scientific">Paraburkholderia xenovorans (strain LB400)</name>
    <dbReference type="NCBI Taxonomy" id="266265"/>
    <lineage>
        <taxon>Bacteria</taxon>
        <taxon>Pseudomonadati</taxon>
        <taxon>Pseudomonadota</taxon>
        <taxon>Betaproteobacteria</taxon>
        <taxon>Burkholderiales</taxon>
        <taxon>Burkholderiaceae</taxon>
        <taxon>Paraburkholderia</taxon>
    </lineage>
</organism>
<protein>
    <recommendedName>
        <fullName evidence="1">Large ribosomal subunit protein uL18</fullName>
    </recommendedName>
    <alternativeName>
        <fullName evidence="2">50S ribosomal protein L18</fullName>
    </alternativeName>
</protein>